<proteinExistence type="inferred from homology"/>
<keyword id="KW-1185">Reference proteome</keyword>
<keyword id="KW-0687">Ribonucleoprotein</keyword>
<keyword id="KW-0689">Ribosomal protein</keyword>
<keyword id="KW-0694">RNA-binding</keyword>
<keyword id="KW-0699">rRNA-binding</keyword>
<sequence>MSRYTGPRHKLARRLGISLDGTGKDIKRNFPPGQHGHNNRRKLSEYGIQLQEKQKLRHMFGLNEKQFRRTFDNASKMAGVVGENFMKLLESRLDNLVYRMGFAPTRPAARQLVNHGHFLVNGKKVNIPSYRVQPGDVISIREKSRGLQLIKDALEGRTFLPNYVTFNDAAAEGTFTRLPDREEMPAEINEVLIVEFYSR</sequence>
<reference key="1">
    <citation type="submission" date="2005-03" db="EMBL/GenBank/DDBJ databases">
        <title>Brevibacillus brevis strain 47, complete genome.</title>
        <authorList>
            <person name="Hosoyama A."/>
            <person name="Yamada R."/>
            <person name="Hongo Y."/>
            <person name="Terui Y."/>
            <person name="Ankai A."/>
            <person name="Masuyama W."/>
            <person name="Sekiguchi M."/>
            <person name="Takeda T."/>
            <person name="Asano K."/>
            <person name="Ohji S."/>
            <person name="Ichikawa N."/>
            <person name="Narita S."/>
            <person name="Aoki N."/>
            <person name="Miura H."/>
            <person name="Matsushita S."/>
            <person name="Sekigawa T."/>
            <person name="Yamagata H."/>
            <person name="Yoshikawa H."/>
            <person name="Udaka S."/>
            <person name="Tanikawa S."/>
            <person name="Fujita N."/>
        </authorList>
    </citation>
    <scope>NUCLEOTIDE SEQUENCE [LARGE SCALE GENOMIC DNA]</scope>
    <source>
        <strain>47 / JCM 6285 / NBRC 100599</strain>
    </source>
</reference>
<name>RS4_BREBN</name>
<accession>C0ZHK9</accession>
<protein>
    <recommendedName>
        <fullName evidence="1">Small ribosomal subunit protein uS4</fullName>
    </recommendedName>
    <alternativeName>
        <fullName evidence="2">30S ribosomal protein S4</fullName>
    </alternativeName>
</protein>
<feature type="chain" id="PRO_1000165386" description="Small ribosomal subunit protein uS4">
    <location>
        <begin position="1"/>
        <end position="199"/>
    </location>
</feature>
<feature type="domain" description="S4 RNA-binding" evidence="1">
    <location>
        <begin position="91"/>
        <end position="154"/>
    </location>
</feature>
<evidence type="ECO:0000255" key="1">
    <source>
        <dbReference type="HAMAP-Rule" id="MF_01306"/>
    </source>
</evidence>
<evidence type="ECO:0000305" key="2"/>
<dbReference type="EMBL" id="AP008955">
    <property type="protein sequence ID" value="BAH45133.1"/>
    <property type="molecule type" value="Genomic_DNA"/>
</dbReference>
<dbReference type="RefSeq" id="WP_015892403.1">
    <property type="nucleotide sequence ID" value="NC_012491.1"/>
</dbReference>
<dbReference type="SMR" id="C0ZHK9"/>
<dbReference type="STRING" id="358681.BBR47_41560"/>
<dbReference type="KEGG" id="bbe:BBR47_41560"/>
<dbReference type="eggNOG" id="COG0522">
    <property type="taxonomic scope" value="Bacteria"/>
</dbReference>
<dbReference type="HOGENOM" id="CLU_092403_0_1_9"/>
<dbReference type="Proteomes" id="UP000001877">
    <property type="component" value="Chromosome"/>
</dbReference>
<dbReference type="GO" id="GO:0015935">
    <property type="term" value="C:small ribosomal subunit"/>
    <property type="evidence" value="ECO:0007669"/>
    <property type="project" value="InterPro"/>
</dbReference>
<dbReference type="GO" id="GO:0019843">
    <property type="term" value="F:rRNA binding"/>
    <property type="evidence" value="ECO:0007669"/>
    <property type="project" value="UniProtKB-UniRule"/>
</dbReference>
<dbReference type="GO" id="GO:0003735">
    <property type="term" value="F:structural constituent of ribosome"/>
    <property type="evidence" value="ECO:0007669"/>
    <property type="project" value="InterPro"/>
</dbReference>
<dbReference type="GO" id="GO:0042274">
    <property type="term" value="P:ribosomal small subunit biogenesis"/>
    <property type="evidence" value="ECO:0007669"/>
    <property type="project" value="TreeGrafter"/>
</dbReference>
<dbReference type="GO" id="GO:0006412">
    <property type="term" value="P:translation"/>
    <property type="evidence" value="ECO:0007669"/>
    <property type="project" value="UniProtKB-UniRule"/>
</dbReference>
<dbReference type="CDD" id="cd00165">
    <property type="entry name" value="S4"/>
    <property type="match status" value="1"/>
</dbReference>
<dbReference type="FunFam" id="3.10.290.10:FF:000001">
    <property type="entry name" value="30S ribosomal protein S4"/>
    <property type="match status" value="1"/>
</dbReference>
<dbReference type="Gene3D" id="1.10.1050.10">
    <property type="entry name" value="Ribosomal Protein S4 Delta 41, Chain A, domain 1"/>
    <property type="match status" value="1"/>
</dbReference>
<dbReference type="Gene3D" id="3.10.290.10">
    <property type="entry name" value="RNA-binding S4 domain"/>
    <property type="match status" value="1"/>
</dbReference>
<dbReference type="HAMAP" id="MF_01306_B">
    <property type="entry name" value="Ribosomal_uS4_B"/>
    <property type="match status" value="1"/>
</dbReference>
<dbReference type="InterPro" id="IPR022801">
    <property type="entry name" value="Ribosomal_uS4"/>
</dbReference>
<dbReference type="InterPro" id="IPR005709">
    <property type="entry name" value="Ribosomal_uS4_bac-type"/>
</dbReference>
<dbReference type="InterPro" id="IPR018079">
    <property type="entry name" value="Ribosomal_uS4_CS"/>
</dbReference>
<dbReference type="InterPro" id="IPR001912">
    <property type="entry name" value="Ribosomal_uS4_N"/>
</dbReference>
<dbReference type="InterPro" id="IPR002942">
    <property type="entry name" value="S4_RNA-bd"/>
</dbReference>
<dbReference type="InterPro" id="IPR036986">
    <property type="entry name" value="S4_RNA-bd_sf"/>
</dbReference>
<dbReference type="NCBIfam" id="NF003717">
    <property type="entry name" value="PRK05327.1"/>
    <property type="match status" value="1"/>
</dbReference>
<dbReference type="NCBIfam" id="TIGR01017">
    <property type="entry name" value="rpsD_bact"/>
    <property type="match status" value="1"/>
</dbReference>
<dbReference type="PANTHER" id="PTHR11831">
    <property type="entry name" value="30S 40S RIBOSOMAL PROTEIN"/>
    <property type="match status" value="1"/>
</dbReference>
<dbReference type="PANTHER" id="PTHR11831:SF4">
    <property type="entry name" value="SMALL RIBOSOMAL SUBUNIT PROTEIN US4M"/>
    <property type="match status" value="1"/>
</dbReference>
<dbReference type="Pfam" id="PF00163">
    <property type="entry name" value="Ribosomal_S4"/>
    <property type="match status" value="1"/>
</dbReference>
<dbReference type="Pfam" id="PF01479">
    <property type="entry name" value="S4"/>
    <property type="match status" value="1"/>
</dbReference>
<dbReference type="SMART" id="SM01390">
    <property type="entry name" value="Ribosomal_S4"/>
    <property type="match status" value="1"/>
</dbReference>
<dbReference type="SMART" id="SM00363">
    <property type="entry name" value="S4"/>
    <property type="match status" value="1"/>
</dbReference>
<dbReference type="SUPFAM" id="SSF55174">
    <property type="entry name" value="Alpha-L RNA-binding motif"/>
    <property type="match status" value="1"/>
</dbReference>
<dbReference type="PROSITE" id="PS00632">
    <property type="entry name" value="RIBOSOMAL_S4"/>
    <property type="match status" value="1"/>
</dbReference>
<dbReference type="PROSITE" id="PS50889">
    <property type="entry name" value="S4"/>
    <property type="match status" value="1"/>
</dbReference>
<gene>
    <name evidence="1" type="primary">rpsD</name>
    <name type="ordered locus">BBR47_41560</name>
</gene>
<organism>
    <name type="scientific">Brevibacillus brevis (strain 47 / JCM 6285 / NBRC 100599)</name>
    <dbReference type="NCBI Taxonomy" id="358681"/>
    <lineage>
        <taxon>Bacteria</taxon>
        <taxon>Bacillati</taxon>
        <taxon>Bacillota</taxon>
        <taxon>Bacilli</taxon>
        <taxon>Bacillales</taxon>
        <taxon>Paenibacillaceae</taxon>
        <taxon>Brevibacillus</taxon>
    </lineage>
</organism>
<comment type="function">
    <text evidence="1">One of the primary rRNA binding proteins, it binds directly to 16S rRNA where it nucleates assembly of the body of the 30S subunit.</text>
</comment>
<comment type="function">
    <text evidence="1">With S5 and S12 plays an important role in translational accuracy.</text>
</comment>
<comment type="subunit">
    <text evidence="1">Part of the 30S ribosomal subunit. Contacts protein S5. The interaction surface between S4 and S5 is involved in control of translational fidelity.</text>
</comment>
<comment type="similarity">
    <text evidence="1">Belongs to the universal ribosomal protein uS4 family.</text>
</comment>